<proteinExistence type="inferred from homology"/>
<accession>B5FIR5</accession>
<sequence>MTTLAIDIGGTKLAAALIDKNLRISQRRELPTPASKTPDALREALKALVEPLRAEARQVAIASTGIIQEGMLLALNPHNLGGLLHFPLVQTLETIAGLPTLAVNDAQAAAWAEYHALPDDIRDMVFITVSTGVGGGVVCDGKLLTGKGGLAGHLGHTLADPHGPVCGCGRVGCVEAIASGRGMAAAARDDLAGCDAKTLFIRAGEGHQQARHLVSQSAQVIARMIADVKATTDCQCVVIGGSVGLAEGYLEQVRAFLMQEPAPYHVALSAARYRHDAGLLGAALLAQGDTL</sequence>
<feature type="chain" id="PRO_1000139689" description="N-acetylmannosamine kinase">
    <location>
        <begin position="1"/>
        <end position="291"/>
    </location>
</feature>
<feature type="binding site" evidence="1">
    <location>
        <begin position="5"/>
        <end position="12"/>
    </location>
    <ligand>
        <name>ATP</name>
        <dbReference type="ChEBI" id="CHEBI:30616"/>
    </ligand>
</feature>
<feature type="binding site" evidence="1">
    <location>
        <begin position="132"/>
        <end position="139"/>
    </location>
    <ligand>
        <name>ATP</name>
        <dbReference type="ChEBI" id="CHEBI:30616"/>
    </ligand>
</feature>
<feature type="binding site" evidence="1">
    <location>
        <position position="156"/>
    </location>
    <ligand>
        <name>Zn(2+)</name>
        <dbReference type="ChEBI" id="CHEBI:29105"/>
    </ligand>
</feature>
<feature type="binding site" evidence="1">
    <location>
        <position position="166"/>
    </location>
    <ligand>
        <name>Zn(2+)</name>
        <dbReference type="ChEBI" id="CHEBI:29105"/>
    </ligand>
</feature>
<feature type="binding site" evidence="1">
    <location>
        <position position="168"/>
    </location>
    <ligand>
        <name>Zn(2+)</name>
        <dbReference type="ChEBI" id="CHEBI:29105"/>
    </ligand>
</feature>
<feature type="binding site" evidence="1">
    <location>
        <position position="173"/>
    </location>
    <ligand>
        <name>Zn(2+)</name>
        <dbReference type="ChEBI" id="CHEBI:29105"/>
    </ligand>
</feature>
<name>NANK_SALDC</name>
<evidence type="ECO:0000255" key="1">
    <source>
        <dbReference type="HAMAP-Rule" id="MF_01234"/>
    </source>
</evidence>
<gene>
    <name evidence="1" type="primary">nanK</name>
    <name type="ordered locus">SeD_A3696</name>
</gene>
<keyword id="KW-0067">ATP-binding</keyword>
<keyword id="KW-0119">Carbohydrate metabolism</keyword>
<keyword id="KW-0418">Kinase</keyword>
<keyword id="KW-0479">Metal-binding</keyword>
<keyword id="KW-0547">Nucleotide-binding</keyword>
<keyword id="KW-0808">Transferase</keyword>
<keyword id="KW-0862">Zinc</keyword>
<protein>
    <recommendedName>
        <fullName evidence="1">N-acetylmannosamine kinase</fullName>
        <ecNumber evidence="1">2.7.1.60</ecNumber>
    </recommendedName>
    <alternativeName>
        <fullName evidence="1">ManNAc kinase</fullName>
    </alternativeName>
    <alternativeName>
        <fullName evidence="1">N-acetyl-D-mannosamine kinase</fullName>
    </alternativeName>
</protein>
<comment type="function">
    <text evidence="1">Catalyzes the phosphorylation of N-acetylmannosamine (ManNAc) to ManNAc-6-P.</text>
</comment>
<comment type="catalytic activity">
    <reaction evidence="1">
        <text>an N-acyl-D-mannosamine + ATP = an N-acyl-D-mannosamine 6-phosphate + ADP + H(+)</text>
        <dbReference type="Rhea" id="RHEA:23832"/>
        <dbReference type="ChEBI" id="CHEBI:15378"/>
        <dbReference type="ChEBI" id="CHEBI:16062"/>
        <dbReference type="ChEBI" id="CHEBI:30616"/>
        <dbReference type="ChEBI" id="CHEBI:57666"/>
        <dbReference type="ChEBI" id="CHEBI:456216"/>
        <dbReference type="EC" id="2.7.1.60"/>
    </reaction>
</comment>
<comment type="pathway">
    <text evidence="1">Amino-sugar metabolism; N-acetylneuraminate degradation; D-fructose 6-phosphate from N-acetylneuraminate: step 2/5.</text>
</comment>
<comment type="subunit">
    <text evidence="1">Homodimer.</text>
</comment>
<comment type="similarity">
    <text evidence="1">Belongs to the ROK (NagC/XylR) family. NanK subfamily.</text>
</comment>
<dbReference type="EC" id="2.7.1.60" evidence="1"/>
<dbReference type="EMBL" id="CP001144">
    <property type="protein sequence ID" value="ACH74507.1"/>
    <property type="molecule type" value="Genomic_DNA"/>
</dbReference>
<dbReference type="RefSeq" id="WP_000208970.1">
    <property type="nucleotide sequence ID" value="NC_011205.1"/>
</dbReference>
<dbReference type="SMR" id="B5FIR5"/>
<dbReference type="KEGG" id="sed:SeD_A3696"/>
<dbReference type="HOGENOM" id="CLU_036604_0_4_6"/>
<dbReference type="UniPathway" id="UPA00629">
    <property type="reaction ID" value="UER00681"/>
</dbReference>
<dbReference type="Proteomes" id="UP000008322">
    <property type="component" value="Chromosome"/>
</dbReference>
<dbReference type="GO" id="GO:0005524">
    <property type="term" value="F:ATP binding"/>
    <property type="evidence" value="ECO:0007669"/>
    <property type="project" value="UniProtKB-UniRule"/>
</dbReference>
<dbReference type="GO" id="GO:0009384">
    <property type="term" value="F:N-acylmannosamine kinase activity"/>
    <property type="evidence" value="ECO:0007669"/>
    <property type="project" value="UniProtKB-UniRule"/>
</dbReference>
<dbReference type="GO" id="GO:0008270">
    <property type="term" value="F:zinc ion binding"/>
    <property type="evidence" value="ECO:0007669"/>
    <property type="project" value="UniProtKB-UniRule"/>
</dbReference>
<dbReference type="GO" id="GO:0019262">
    <property type="term" value="P:N-acetylneuraminate catabolic process"/>
    <property type="evidence" value="ECO:0007669"/>
    <property type="project" value="UniProtKB-UniRule"/>
</dbReference>
<dbReference type="FunFam" id="3.30.420.40:FF:000062">
    <property type="entry name" value="N-acetylmannosamine kinase"/>
    <property type="match status" value="1"/>
</dbReference>
<dbReference type="FunFam" id="3.30.420.40:FF:000063">
    <property type="entry name" value="N-acetylmannosamine kinase"/>
    <property type="match status" value="1"/>
</dbReference>
<dbReference type="Gene3D" id="3.30.420.40">
    <property type="match status" value="2"/>
</dbReference>
<dbReference type="HAMAP" id="MF_01234">
    <property type="entry name" value="ManNAc_kinase"/>
    <property type="match status" value="1"/>
</dbReference>
<dbReference type="InterPro" id="IPR043129">
    <property type="entry name" value="ATPase_NBD"/>
</dbReference>
<dbReference type="InterPro" id="IPR023945">
    <property type="entry name" value="ManNAc_kinase_bac"/>
</dbReference>
<dbReference type="InterPro" id="IPR000600">
    <property type="entry name" value="ROK"/>
</dbReference>
<dbReference type="InterPro" id="IPR049874">
    <property type="entry name" value="ROK_cs"/>
</dbReference>
<dbReference type="NCBIfam" id="NF047821">
    <property type="entry name" value="NactlManKinNanK"/>
    <property type="match status" value="1"/>
</dbReference>
<dbReference type="NCBIfam" id="NF003461">
    <property type="entry name" value="PRK05082.1"/>
    <property type="match status" value="1"/>
</dbReference>
<dbReference type="PANTHER" id="PTHR18964:SF169">
    <property type="entry name" value="N-ACETYLMANNOSAMINE KINASE"/>
    <property type="match status" value="1"/>
</dbReference>
<dbReference type="PANTHER" id="PTHR18964">
    <property type="entry name" value="ROK (REPRESSOR, ORF, KINASE) FAMILY"/>
    <property type="match status" value="1"/>
</dbReference>
<dbReference type="Pfam" id="PF00480">
    <property type="entry name" value="ROK"/>
    <property type="match status" value="1"/>
</dbReference>
<dbReference type="SUPFAM" id="SSF53067">
    <property type="entry name" value="Actin-like ATPase domain"/>
    <property type="match status" value="1"/>
</dbReference>
<dbReference type="PROSITE" id="PS01125">
    <property type="entry name" value="ROK"/>
    <property type="match status" value="1"/>
</dbReference>
<organism>
    <name type="scientific">Salmonella dublin (strain CT_02021853)</name>
    <dbReference type="NCBI Taxonomy" id="439851"/>
    <lineage>
        <taxon>Bacteria</taxon>
        <taxon>Pseudomonadati</taxon>
        <taxon>Pseudomonadota</taxon>
        <taxon>Gammaproteobacteria</taxon>
        <taxon>Enterobacterales</taxon>
        <taxon>Enterobacteriaceae</taxon>
        <taxon>Salmonella</taxon>
    </lineage>
</organism>
<reference key="1">
    <citation type="journal article" date="2011" name="J. Bacteriol.">
        <title>Comparative genomics of 28 Salmonella enterica isolates: evidence for CRISPR-mediated adaptive sublineage evolution.</title>
        <authorList>
            <person name="Fricke W.F."/>
            <person name="Mammel M.K."/>
            <person name="McDermott P.F."/>
            <person name="Tartera C."/>
            <person name="White D.G."/>
            <person name="Leclerc J.E."/>
            <person name="Ravel J."/>
            <person name="Cebula T.A."/>
        </authorList>
    </citation>
    <scope>NUCLEOTIDE SEQUENCE [LARGE SCALE GENOMIC DNA]</scope>
    <source>
        <strain>CT_02021853</strain>
    </source>
</reference>